<feature type="chain" id="PRO_0000163816" description="8-amino-7-oxononanoate synthase">
    <location>
        <begin position="1"/>
        <end position="386"/>
    </location>
</feature>
<feature type="binding site" evidence="1">
    <location>
        <position position="31"/>
    </location>
    <ligand>
        <name>substrate</name>
    </ligand>
</feature>
<feature type="binding site" evidence="1">
    <location>
        <begin position="109"/>
        <end position="110"/>
    </location>
    <ligand>
        <name>pyridoxal 5'-phosphate</name>
        <dbReference type="ChEBI" id="CHEBI:597326"/>
    </ligand>
</feature>
<feature type="binding site" evidence="1">
    <location>
        <position position="134"/>
    </location>
    <ligand>
        <name>substrate</name>
    </ligand>
</feature>
<feature type="binding site" evidence="1">
    <location>
        <position position="180"/>
    </location>
    <ligand>
        <name>pyridoxal 5'-phosphate</name>
        <dbReference type="ChEBI" id="CHEBI:597326"/>
    </ligand>
</feature>
<feature type="binding site" evidence="1">
    <location>
        <begin position="205"/>
        <end position="208"/>
    </location>
    <ligand>
        <name>pyridoxal 5'-phosphate</name>
        <dbReference type="ChEBI" id="CHEBI:597326"/>
    </ligand>
</feature>
<feature type="binding site" evidence="1">
    <location>
        <begin position="236"/>
        <end position="239"/>
    </location>
    <ligand>
        <name>pyridoxal 5'-phosphate</name>
        <dbReference type="ChEBI" id="CHEBI:597326"/>
    </ligand>
</feature>
<feature type="binding site" evidence="1">
    <location>
        <position position="349"/>
    </location>
    <ligand>
        <name>substrate</name>
    </ligand>
</feature>
<feature type="modified residue" description="N6-(pyridoxal phosphate)lysine" evidence="1">
    <location>
        <position position="239"/>
    </location>
</feature>
<accession>P0A4X5</accession>
<accession>A0A1R3XYP3</accession>
<accession>O06621</accession>
<accession>X2BI87</accession>
<sequence length="386" mass="40028">MKAATQARIDDSPLAWLDAVQRQRHEAGLRRCLRPRPAVATELDLASNDYLGLSRHPAVIDGGVQALRIWGAGATGSRLVTGDTKLHQQFEAELAEFVGAAAGLLFSSGYTANLGAVVGLSGPGSLLVSDARSHASLVDACRLSRARVVVTPHRDVDAVDAALRSRDEQRAVVVTDSVFSADGSLAPVRELLEVCRRHGALLLVDEAHGLGVRGGGRGLLYELGLAGAPDVVMTTTLSKALGSQGGVVLGPTPVRAHLIDAARPFIFDTGLAPAAVGAARAALRVLQAEPWRPQAVLNHAGELARMCGVAAVPDSAMVSVILGEPESAVAAAAACLDAGVKVGCFRPPTVPAGTSRLRLTARASLNAGELELARRVLTDVLAVARR</sequence>
<dbReference type="EC" id="2.3.1.47"/>
<dbReference type="EMBL" id="AF041819">
    <property type="protein sequence ID" value="AAB96957.1"/>
    <property type="molecule type" value="Genomic_DNA"/>
</dbReference>
<dbReference type="EMBL" id="LT708304">
    <property type="protein sequence ID" value="SIU00199.1"/>
    <property type="molecule type" value="Genomic_DNA"/>
</dbReference>
<dbReference type="RefSeq" id="NP_855248.1">
    <property type="nucleotide sequence ID" value="NC_002945.3"/>
</dbReference>
<dbReference type="RefSeq" id="WP_003407805.1">
    <property type="nucleotide sequence ID" value="NC_002945.4"/>
</dbReference>
<dbReference type="SMR" id="P0A4X5"/>
<dbReference type="KEGG" id="mbo:BQ2027_MB1596"/>
<dbReference type="PATRIC" id="fig|233413.5.peg.1743"/>
<dbReference type="UniPathway" id="UPA00078"/>
<dbReference type="Proteomes" id="UP000001419">
    <property type="component" value="Chromosome"/>
</dbReference>
<dbReference type="GO" id="GO:0008710">
    <property type="term" value="F:8-amino-7-oxononanoate synthase activity"/>
    <property type="evidence" value="ECO:0007669"/>
    <property type="project" value="UniProtKB-EC"/>
</dbReference>
<dbReference type="GO" id="GO:0030170">
    <property type="term" value="F:pyridoxal phosphate binding"/>
    <property type="evidence" value="ECO:0007669"/>
    <property type="project" value="InterPro"/>
</dbReference>
<dbReference type="GO" id="GO:0009102">
    <property type="term" value="P:biotin biosynthetic process"/>
    <property type="evidence" value="ECO:0007669"/>
    <property type="project" value="UniProtKB-UniPathway"/>
</dbReference>
<dbReference type="FunFam" id="3.40.640.10:FF:000130">
    <property type="entry name" value="8-amino-7-oxononanoate synthase"/>
    <property type="match status" value="1"/>
</dbReference>
<dbReference type="Gene3D" id="3.90.1150.10">
    <property type="entry name" value="Aspartate Aminotransferase, domain 1"/>
    <property type="match status" value="1"/>
</dbReference>
<dbReference type="Gene3D" id="3.40.640.10">
    <property type="entry name" value="Type I PLP-dependent aspartate aminotransferase-like (Major domain)"/>
    <property type="match status" value="1"/>
</dbReference>
<dbReference type="InterPro" id="IPR001917">
    <property type="entry name" value="Aminotrans_II_pyridoxalP_BS"/>
</dbReference>
<dbReference type="InterPro" id="IPR004839">
    <property type="entry name" value="Aminotransferase_I/II_large"/>
</dbReference>
<dbReference type="InterPro" id="IPR050087">
    <property type="entry name" value="AON_synthase_class-II"/>
</dbReference>
<dbReference type="InterPro" id="IPR015424">
    <property type="entry name" value="PyrdxlP-dep_Trfase"/>
</dbReference>
<dbReference type="InterPro" id="IPR015421">
    <property type="entry name" value="PyrdxlP-dep_Trfase_major"/>
</dbReference>
<dbReference type="InterPro" id="IPR015422">
    <property type="entry name" value="PyrdxlP-dep_Trfase_small"/>
</dbReference>
<dbReference type="PANTHER" id="PTHR13693:SF100">
    <property type="entry name" value="8-AMINO-7-OXONONANOATE SYNTHASE"/>
    <property type="match status" value="1"/>
</dbReference>
<dbReference type="PANTHER" id="PTHR13693">
    <property type="entry name" value="CLASS II AMINOTRANSFERASE/8-AMINO-7-OXONONANOATE SYNTHASE"/>
    <property type="match status" value="1"/>
</dbReference>
<dbReference type="Pfam" id="PF00155">
    <property type="entry name" value="Aminotran_1_2"/>
    <property type="match status" value="1"/>
</dbReference>
<dbReference type="SUPFAM" id="SSF53383">
    <property type="entry name" value="PLP-dependent transferases"/>
    <property type="match status" value="1"/>
</dbReference>
<dbReference type="PROSITE" id="PS00599">
    <property type="entry name" value="AA_TRANSFER_CLASS_2"/>
    <property type="match status" value="1"/>
</dbReference>
<name>BIOF_MYCBO</name>
<gene>
    <name type="ordered locus">BQ2027_MB1596</name>
</gene>
<keyword id="KW-0012">Acyltransferase</keyword>
<keyword id="KW-0093">Biotin biosynthesis</keyword>
<keyword id="KW-0663">Pyridoxal phosphate</keyword>
<keyword id="KW-1185">Reference proteome</keyword>
<keyword id="KW-0808">Transferase</keyword>
<evidence type="ECO:0000250" key="1"/>
<evidence type="ECO:0000305" key="2"/>
<protein>
    <recommendedName>
        <fullName>8-amino-7-oxononanoate synthase</fullName>
        <shortName>AONS</shortName>
        <ecNumber>2.3.1.47</ecNumber>
    </recommendedName>
    <alternativeName>
        <fullName>7-keto-8-amino-pelargonic acid synthase</fullName>
        <shortName>7-KAP synthase</shortName>
        <shortName>KAPA synthase</shortName>
    </alternativeName>
    <alternativeName>
        <fullName>8-amino-7-ketopelargonate synthase</fullName>
    </alternativeName>
    <alternativeName>
        <fullName>Alpha-oxoamine synthase</fullName>
    </alternativeName>
</protein>
<organism>
    <name type="scientific">Mycobacterium bovis (strain ATCC BAA-935 / AF2122/97)</name>
    <dbReference type="NCBI Taxonomy" id="233413"/>
    <lineage>
        <taxon>Bacteria</taxon>
        <taxon>Bacillati</taxon>
        <taxon>Actinomycetota</taxon>
        <taxon>Actinomycetes</taxon>
        <taxon>Mycobacteriales</taxon>
        <taxon>Mycobacteriaceae</taxon>
        <taxon>Mycobacterium</taxon>
        <taxon>Mycobacterium tuberculosis complex</taxon>
    </lineage>
</organism>
<reference key="1">
    <citation type="submission" date="1998-01" db="EMBL/GenBank/DDBJ databases">
        <title>Cloning, sequencing, and identification of Mycobacterium bovis BCG biotin biosynthetic genes by complementing two Mycobacterium smegmatis biotin mutants.</title>
        <authorList>
            <person name="Yu S."/>
            <person name="Jacobs W.R. Jr."/>
        </authorList>
    </citation>
    <scope>NUCLEOTIDE SEQUENCE [GENOMIC DNA]</scope>
    <source>
        <strain>BCG / Pasteur</strain>
    </source>
</reference>
<reference key="2">
    <citation type="journal article" date="2003" name="Proc. Natl. Acad. Sci. U.S.A.">
        <title>The complete genome sequence of Mycobacterium bovis.</title>
        <authorList>
            <person name="Garnier T."/>
            <person name="Eiglmeier K."/>
            <person name="Camus J.-C."/>
            <person name="Medina N."/>
            <person name="Mansoor H."/>
            <person name="Pryor M."/>
            <person name="Duthoy S."/>
            <person name="Grondin S."/>
            <person name="Lacroix C."/>
            <person name="Monsempe C."/>
            <person name="Simon S."/>
            <person name="Harris B."/>
            <person name="Atkin R."/>
            <person name="Doggett J."/>
            <person name="Mayes R."/>
            <person name="Keating L."/>
            <person name="Wheeler P.R."/>
            <person name="Parkhill J."/>
            <person name="Barrell B.G."/>
            <person name="Cole S.T."/>
            <person name="Gordon S.V."/>
            <person name="Hewinson R.G."/>
        </authorList>
    </citation>
    <scope>NUCLEOTIDE SEQUENCE [LARGE SCALE GENOMIC DNA]</scope>
    <source>
        <strain>ATCC BAA-935 / AF2122/97</strain>
    </source>
</reference>
<reference key="3">
    <citation type="journal article" date="2017" name="Genome Announc.">
        <title>Updated reference genome sequence and annotation of Mycobacterium bovis AF2122/97.</title>
        <authorList>
            <person name="Malone K.M."/>
            <person name="Farrell D."/>
            <person name="Stuber T.P."/>
            <person name="Schubert O.T."/>
            <person name="Aebersold R."/>
            <person name="Robbe-Austerman S."/>
            <person name="Gordon S.V."/>
        </authorList>
    </citation>
    <scope>NUCLEOTIDE SEQUENCE [LARGE SCALE GENOMIC DNA]</scope>
    <scope>GENOME REANNOTATION</scope>
    <source>
        <strain>ATCC BAA-935 / AF2122/97</strain>
    </source>
</reference>
<comment type="function">
    <text evidence="1">Catalyzes the decarboxylative condensation of pimeloyl-[acyl-carrier protein] and L-alanine to produce 8-amino-7-oxononanoate (AON), [acyl-carrier protein], and carbon dioxide.</text>
</comment>
<comment type="catalytic activity">
    <reaction>
        <text>6-carboxyhexanoyl-[ACP] + L-alanine + H(+) = (8S)-8-amino-7-oxononanoate + holo-[ACP] + CO2</text>
        <dbReference type="Rhea" id="RHEA:42288"/>
        <dbReference type="Rhea" id="RHEA-COMP:9685"/>
        <dbReference type="Rhea" id="RHEA-COMP:9955"/>
        <dbReference type="ChEBI" id="CHEBI:15378"/>
        <dbReference type="ChEBI" id="CHEBI:16526"/>
        <dbReference type="ChEBI" id="CHEBI:57972"/>
        <dbReference type="ChEBI" id="CHEBI:64479"/>
        <dbReference type="ChEBI" id="CHEBI:78846"/>
        <dbReference type="ChEBI" id="CHEBI:149468"/>
        <dbReference type="EC" id="2.3.1.47"/>
    </reaction>
</comment>
<comment type="cofactor">
    <cofactor evidence="1">
        <name>pyridoxal 5'-phosphate</name>
        <dbReference type="ChEBI" id="CHEBI:597326"/>
    </cofactor>
</comment>
<comment type="pathway">
    <text>Cofactor biosynthesis; biotin biosynthesis.</text>
</comment>
<comment type="subunit">
    <text evidence="1">Homodimer.</text>
</comment>
<comment type="similarity">
    <text evidence="2">Belongs to the class-II pyridoxal-phosphate-dependent aminotransferase family. BioF subfamily.</text>
</comment>
<proteinExistence type="inferred from homology"/>